<protein>
    <recommendedName>
        <fullName>Putative esterase TV1331</fullName>
        <ecNumber>3.1.2.-</ecNumber>
    </recommendedName>
</protein>
<sequence>MFDGSDLKNLFSLDGFLKTIQFEPEYIREGEISIIVPLRNNLLRIGEIMNGGAVMAISDAIGGLSAMTYPGIVNQVTVSFNTEFMRPIAKGPVRFISRVDRIGKSIAYVEVLVYDGENLLSSKSTGVYFLYRS</sequence>
<comment type="similarity">
    <text evidence="1">Belongs to the thioesterase PaaI family.</text>
</comment>
<dbReference type="EC" id="3.1.2.-"/>
<dbReference type="EMBL" id="BA000011">
    <property type="protein sequence ID" value="BAB60473.1"/>
    <property type="molecule type" value="Genomic_DNA"/>
</dbReference>
<dbReference type="RefSeq" id="WP_010917566.1">
    <property type="nucleotide sequence ID" value="NC_002689.2"/>
</dbReference>
<dbReference type="SMR" id="Q978T4"/>
<dbReference type="STRING" id="273116.gene:9382139"/>
<dbReference type="PaxDb" id="273116-14325570"/>
<dbReference type="GeneID" id="1441448"/>
<dbReference type="KEGG" id="tvo:TVG1373162"/>
<dbReference type="eggNOG" id="arCOG00777">
    <property type="taxonomic scope" value="Archaea"/>
</dbReference>
<dbReference type="HOGENOM" id="CLU_089876_3_3_2"/>
<dbReference type="OrthoDB" id="24516at2157"/>
<dbReference type="PhylomeDB" id="Q978T4"/>
<dbReference type="Proteomes" id="UP000001017">
    <property type="component" value="Chromosome"/>
</dbReference>
<dbReference type="GO" id="GO:0016787">
    <property type="term" value="F:hydrolase activity"/>
    <property type="evidence" value="ECO:0007669"/>
    <property type="project" value="UniProtKB-KW"/>
</dbReference>
<dbReference type="CDD" id="cd03443">
    <property type="entry name" value="PaaI_thioesterase"/>
    <property type="match status" value="1"/>
</dbReference>
<dbReference type="Gene3D" id="3.10.129.10">
    <property type="entry name" value="Hotdog Thioesterase"/>
    <property type="match status" value="1"/>
</dbReference>
<dbReference type="InterPro" id="IPR029069">
    <property type="entry name" value="HotDog_dom_sf"/>
</dbReference>
<dbReference type="InterPro" id="IPR003736">
    <property type="entry name" value="PAAI_dom"/>
</dbReference>
<dbReference type="InterPro" id="IPR006683">
    <property type="entry name" value="Thioestr_dom"/>
</dbReference>
<dbReference type="NCBIfam" id="TIGR00369">
    <property type="entry name" value="unchar_dom_1"/>
    <property type="match status" value="1"/>
</dbReference>
<dbReference type="Pfam" id="PF03061">
    <property type="entry name" value="4HBT"/>
    <property type="match status" value="1"/>
</dbReference>
<dbReference type="SUPFAM" id="SSF54637">
    <property type="entry name" value="Thioesterase/thiol ester dehydrase-isomerase"/>
    <property type="match status" value="1"/>
</dbReference>
<gene>
    <name type="ordered locus">TV1331</name>
    <name type="ORF">TVG1373162</name>
</gene>
<proteinExistence type="inferred from homology"/>
<feature type="chain" id="PRO_0000156696" description="Putative esterase TV1331">
    <location>
        <begin position="1"/>
        <end position="133"/>
    </location>
</feature>
<accession>Q978T4</accession>
<organism>
    <name type="scientific">Thermoplasma volcanium (strain ATCC 51530 / DSM 4299 / JCM 9571 / NBRC 15438 / GSS1)</name>
    <dbReference type="NCBI Taxonomy" id="273116"/>
    <lineage>
        <taxon>Archaea</taxon>
        <taxon>Methanobacteriati</taxon>
        <taxon>Thermoplasmatota</taxon>
        <taxon>Thermoplasmata</taxon>
        <taxon>Thermoplasmatales</taxon>
        <taxon>Thermoplasmataceae</taxon>
        <taxon>Thermoplasma</taxon>
    </lineage>
</organism>
<reference key="1">
    <citation type="journal article" date="2000" name="Proc. Natl. Acad. Sci. U.S.A.">
        <title>Archaeal adaptation to higher temperatures revealed by genomic sequence of Thermoplasma volcanium.</title>
        <authorList>
            <person name="Kawashima T."/>
            <person name="Amano N."/>
            <person name="Koike H."/>
            <person name="Makino S."/>
            <person name="Higuchi S."/>
            <person name="Kawashima-Ohya Y."/>
            <person name="Watanabe K."/>
            <person name="Yamazaki M."/>
            <person name="Kanehori K."/>
            <person name="Kawamoto T."/>
            <person name="Nunoshiba T."/>
            <person name="Yamamoto Y."/>
            <person name="Aramaki H."/>
            <person name="Makino K."/>
            <person name="Suzuki M."/>
        </authorList>
    </citation>
    <scope>NUCLEOTIDE SEQUENCE [LARGE SCALE GENOMIC DNA]</scope>
    <source>
        <strain>ATCC 51530 / DSM 4299 / JCM 9571 / NBRC 15438 / GSS1</strain>
    </source>
</reference>
<evidence type="ECO:0000305" key="1"/>
<keyword id="KW-0378">Hydrolase</keyword>
<name>Y1331_THEVO</name>